<feature type="chain" id="PRO_1000047513" description="Glycine--tRNA ligase alpha subunit">
    <location>
        <begin position="1"/>
        <end position="292"/>
    </location>
</feature>
<organism>
    <name type="scientific">Syntrophus aciditrophicus (strain SB)</name>
    <dbReference type="NCBI Taxonomy" id="56780"/>
    <lineage>
        <taxon>Bacteria</taxon>
        <taxon>Pseudomonadati</taxon>
        <taxon>Thermodesulfobacteriota</taxon>
        <taxon>Syntrophia</taxon>
        <taxon>Syntrophales</taxon>
        <taxon>Syntrophaceae</taxon>
        <taxon>Syntrophus</taxon>
    </lineage>
</organism>
<sequence>MTFQELIFALENYWAKQGCVIQQPYDIEVGAGTFNPATFLRALGPEPWNVAYVEPSRRPTDGRYGENPNRLQHYYQYQVIMKPSPLNIQELYLDSLRSFGIDPLEHDIRFVEDDWESPTVGAWGLGWEVWLDGMEISQFTYFQQVGGIDVKPVCAELTYGIERIAMYIQGIDNVYDLQWNDSIKYGDVHHQGEVEFSTYNFEVADVDMLRKLFDMYEAEAIRTAEKDLVLPAYDYCLKCSHTFNLLNARGAISVAERTSYIGRVRNLARISAEGYIRQRERMGFPLLNRSED</sequence>
<proteinExistence type="inferred from homology"/>
<name>SYGA_SYNAS</name>
<reference key="1">
    <citation type="journal article" date="2007" name="Proc. Natl. Acad. Sci. U.S.A.">
        <title>The genome of Syntrophus aciditrophicus: life at the thermodynamic limit of microbial growth.</title>
        <authorList>
            <person name="McInerney M.J."/>
            <person name="Rohlin L."/>
            <person name="Mouttaki H."/>
            <person name="Kim U."/>
            <person name="Krupp R.S."/>
            <person name="Rios-Hernandez L."/>
            <person name="Sieber J."/>
            <person name="Struchtemeyer C.G."/>
            <person name="Bhattacharyya A."/>
            <person name="Campbell J.W."/>
            <person name="Gunsalus R.P."/>
        </authorList>
    </citation>
    <scope>NUCLEOTIDE SEQUENCE [LARGE SCALE GENOMIC DNA]</scope>
    <source>
        <strain>SB</strain>
    </source>
</reference>
<evidence type="ECO:0000255" key="1">
    <source>
        <dbReference type="HAMAP-Rule" id="MF_00254"/>
    </source>
</evidence>
<comment type="catalytic activity">
    <reaction evidence="1">
        <text>tRNA(Gly) + glycine + ATP = glycyl-tRNA(Gly) + AMP + diphosphate</text>
        <dbReference type="Rhea" id="RHEA:16013"/>
        <dbReference type="Rhea" id="RHEA-COMP:9664"/>
        <dbReference type="Rhea" id="RHEA-COMP:9683"/>
        <dbReference type="ChEBI" id="CHEBI:30616"/>
        <dbReference type="ChEBI" id="CHEBI:33019"/>
        <dbReference type="ChEBI" id="CHEBI:57305"/>
        <dbReference type="ChEBI" id="CHEBI:78442"/>
        <dbReference type="ChEBI" id="CHEBI:78522"/>
        <dbReference type="ChEBI" id="CHEBI:456215"/>
        <dbReference type="EC" id="6.1.1.14"/>
    </reaction>
</comment>
<comment type="subunit">
    <text evidence="1">Tetramer of two alpha and two beta subunits.</text>
</comment>
<comment type="subcellular location">
    <subcellularLocation>
        <location evidence="1">Cytoplasm</location>
    </subcellularLocation>
</comment>
<comment type="similarity">
    <text evidence="1">Belongs to the class-II aminoacyl-tRNA synthetase family.</text>
</comment>
<dbReference type="EC" id="6.1.1.14" evidence="1"/>
<dbReference type="EMBL" id="CP000252">
    <property type="protein sequence ID" value="ABC78094.1"/>
    <property type="molecule type" value="Genomic_DNA"/>
</dbReference>
<dbReference type="RefSeq" id="WP_011418114.1">
    <property type="nucleotide sequence ID" value="NC_007759.1"/>
</dbReference>
<dbReference type="SMR" id="Q2LVI0"/>
<dbReference type="FunCoup" id="Q2LVI0">
    <property type="interactions" value="381"/>
</dbReference>
<dbReference type="STRING" id="56780.SYN_01536"/>
<dbReference type="KEGG" id="sat:SYN_01536"/>
<dbReference type="eggNOG" id="COG0752">
    <property type="taxonomic scope" value="Bacteria"/>
</dbReference>
<dbReference type="HOGENOM" id="CLU_057066_1_0_7"/>
<dbReference type="InParanoid" id="Q2LVI0"/>
<dbReference type="OrthoDB" id="9802183at2"/>
<dbReference type="Proteomes" id="UP000001933">
    <property type="component" value="Chromosome"/>
</dbReference>
<dbReference type="GO" id="GO:0005829">
    <property type="term" value="C:cytosol"/>
    <property type="evidence" value="ECO:0007669"/>
    <property type="project" value="TreeGrafter"/>
</dbReference>
<dbReference type="GO" id="GO:0005524">
    <property type="term" value="F:ATP binding"/>
    <property type="evidence" value="ECO:0007669"/>
    <property type="project" value="UniProtKB-UniRule"/>
</dbReference>
<dbReference type="GO" id="GO:0004820">
    <property type="term" value="F:glycine-tRNA ligase activity"/>
    <property type="evidence" value="ECO:0007669"/>
    <property type="project" value="UniProtKB-UniRule"/>
</dbReference>
<dbReference type="GO" id="GO:0006426">
    <property type="term" value="P:glycyl-tRNA aminoacylation"/>
    <property type="evidence" value="ECO:0007669"/>
    <property type="project" value="UniProtKB-UniRule"/>
</dbReference>
<dbReference type="CDD" id="cd00733">
    <property type="entry name" value="GlyRS_alpha_core"/>
    <property type="match status" value="1"/>
</dbReference>
<dbReference type="FunFam" id="3.30.930.10:FF:000006">
    <property type="entry name" value="Glycine--tRNA ligase alpha subunit"/>
    <property type="match status" value="1"/>
</dbReference>
<dbReference type="Gene3D" id="3.30.930.10">
    <property type="entry name" value="Bira Bifunctional Protein, Domain 2"/>
    <property type="match status" value="1"/>
</dbReference>
<dbReference type="Gene3D" id="1.20.58.180">
    <property type="entry name" value="Class II aaRS and biotin synthetases, domain 2"/>
    <property type="match status" value="1"/>
</dbReference>
<dbReference type="HAMAP" id="MF_00254">
    <property type="entry name" value="Gly_tRNA_synth_alpha"/>
    <property type="match status" value="1"/>
</dbReference>
<dbReference type="InterPro" id="IPR045864">
    <property type="entry name" value="aa-tRNA-synth_II/BPL/LPL"/>
</dbReference>
<dbReference type="InterPro" id="IPR006194">
    <property type="entry name" value="Gly-tRNA-synth_heterodimer"/>
</dbReference>
<dbReference type="InterPro" id="IPR002310">
    <property type="entry name" value="Gly-tRNA_ligase_asu"/>
</dbReference>
<dbReference type="NCBIfam" id="TIGR00388">
    <property type="entry name" value="glyQ"/>
    <property type="match status" value="1"/>
</dbReference>
<dbReference type="NCBIfam" id="NF006827">
    <property type="entry name" value="PRK09348.1"/>
    <property type="match status" value="1"/>
</dbReference>
<dbReference type="PANTHER" id="PTHR30075:SF2">
    <property type="entry name" value="GLYCINE--TRNA LIGASE, CHLOROPLASTIC_MITOCHONDRIAL 2"/>
    <property type="match status" value="1"/>
</dbReference>
<dbReference type="PANTHER" id="PTHR30075">
    <property type="entry name" value="GLYCYL-TRNA SYNTHETASE"/>
    <property type="match status" value="1"/>
</dbReference>
<dbReference type="Pfam" id="PF02091">
    <property type="entry name" value="tRNA-synt_2e"/>
    <property type="match status" value="1"/>
</dbReference>
<dbReference type="PRINTS" id="PR01044">
    <property type="entry name" value="TRNASYNTHGA"/>
</dbReference>
<dbReference type="SUPFAM" id="SSF55681">
    <property type="entry name" value="Class II aaRS and biotin synthetases"/>
    <property type="match status" value="1"/>
</dbReference>
<dbReference type="PROSITE" id="PS50861">
    <property type="entry name" value="AA_TRNA_LIGASE_II_GLYAB"/>
    <property type="match status" value="1"/>
</dbReference>
<gene>
    <name evidence="1" type="primary">glyQ</name>
    <name type="ordered locus">SYNAS_22150</name>
    <name type="ORF">SYN_01536</name>
</gene>
<accession>Q2LVI0</accession>
<keyword id="KW-0030">Aminoacyl-tRNA synthetase</keyword>
<keyword id="KW-0067">ATP-binding</keyword>
<keyword id="KW-0963">Cytoplasm</keyword>
<keyword id="KW-0436">Ligase</keyword>
<keyword id="KW-0547">Nucleotide-binding</keyword>
<keyword id="KW-0648">Protein biosynthesis</keyword>
<keyword id="KW-1185">Reference proteome</keyword>
<protein>
    <recommendedName>
        <fullName evidence="1">Glycine--tRNA ligase alpha subunit</fullName>
        <ecNumber evidence="1">6.1.1.14</ecNumber>
    </recommendedName>
    <alternativeName>
        <fullName evidence="1">Glycyl-tRNA synthetase alpha subunit</fullName>
        <shortName evidence="1">GlyRS</shortName>
    </alternativeName>
</protein>